<gene>
    <name type="primary">ABCG8</name>
    <name type="synonym">WBC8</name>
    <name type="ordered locus">At5g52860</name>
    <name type="ORF">MXC20.8</name>
</gene>
<dbReference type="EMBL" id="AB009055">
    <property type="protein sequence ID" value="BAB10434.1"/>
    <property type="molecule type" value="Genomic_DNA"/>
</dbReference>
<dbReference type="EMBL" id="CP002688">
    <property type="protein sequence ID" value="AED96269.1"/>
    <property type="molecule type" value="Genomic_DNA"/>
</dbReference>
<dbReference type="RefSeq" id="NP_200098.1">
    <property type="nucleotide sequence ID" value="NM_124664.3"/>
</dbReference>
<dbReference type="SMR" id="Q9FLX5"/>
<dbReference type="BioGRID" id="20608">
    <property type="interactions" value="2"/>
</dbReference>
<dbReference type="FunCoup" id="Q9FLX5">
    <property type="interactions" value="66"/>
</dbReference>
<dbReference type="IntAct" id="Q9FLX5">
    <property type="interactions" value="1"/>
</dbReference>
<dbReference type="STRING" id="3702.Q9FLX5"/>
<dbReference type="PaxDb" id="3702-AT5G52860.1"/>
<dbReference type="ProteomicsDB" id="244369"/>
<dbReference type="EnsemblPlants" id="AT5G52860.1">
    <property type="protein sequence ID" value="AT5G52860.1"/>
    <property type="gene ID" value="AT5G52860"/>
</dbReference>
<dbReference type="GeneID" id="835363"/>
<dbReference type="Gramene" id="AT5G52860.1">
    <property type="protein sequence ID" value="AT5G52860.1"/>
    <property type="gene ID" value="AT5G52860"/>
</dbReference>
<dbReference type="KEGG" id="ath:AT5G52860"/>
<dbReference type="Araport" id="AT5G52860"/>
<dbReference type="TAIR" id="AT5G52860">
    <property type="gene designation" value="ABCG8"/>
</dbReference>
<dbReference type="eggNOG" id="KOG0061">
    <property type="taxonomic scope" value="Eukaryota"/>
</dbReference>
<dbReference type="HOGENOM" id="CLU_000604_57_8_1"/>
<dbReference type="InParanoid" id="Q9FLX5"/>
<dbReference type="OMA" id="QAKICVV"/>
<dbReference type="PhylomeDB" id="Q9FLX5"/>
<dbReference type="PRO" id="PR:Q9FLX5"/>
<dbReference type="Proteomes" id="UP000006548">
    <property type="component" value="Chromosome 5"/>
</dbReference>
<dbReference type="ExpressionAtlas" id="Q9FLX5">
    <property type="expression patterns" value="baseline and differential"/>
</dbReference>
<dbReference type="GO" id="GO:0016020">
    <property type="term" value="C:membrane"/>
    <property type="evidence" value="ECO:0007669"/>
    <property type="project" value="UniProtKB-SubCell"/>
</dbReference>
<dbReference type="GO" id="GO:0140359">
    <property type="term" value="F:ABC-type transporter activity"/>
    <property type="evidence" value="ECO:0007669"/>
    <property type="project" value="InterPro"/>
</dbReference>
<dbReference type="GO" id="GO:0005524">
    <property type="term" value="F:ATP binding"/>
    <property type="evidence" value="ECO:0007669"/>
    <property type="project" value="UniProtKB-KW"/>
</dbReference>
<dbReference type="GO" id="GO:0016887">
    <property type="term" value="F:ATP hydrolysis activity"/>
    <property type="evidence" value="ECO:0007669"/>
    <property type="project" value="InterPro"/>
</dbReference>
<dbReference type="FunFam" id="3.40.50.300:FF:002383">
    <property type="entry name" value="ABC transporter G family member 8"/>
    <property type="match status" value="1"/>
</dbReference>
<dbReference type="Gene3D" id="3.40.50.300">
    <property type="entry name" value="P-loop containing nucleotide triphosphate hydrolases"/>
    <property type="match status" value="1"/>
</dbReference>
<dbReference type="InterPro" id="IPR003593">
    <property type="entry name" value="AAA+_ATPase"/>
</dbReference>
<dbReference type="InterPro" id="IPR013525">
    <property type="entry name" value="ABC2_TM"/>
</dbReference>
<dbReference type="InterPro" id="IPR003439">
    <property type="entry name" value="ABC_transporter-like_ATP-bd"/>
</dbReference>
<dbReference type="InterPro" id="IPR017871">
    <property type="entry name" value="ABC_transporter-like_CS"/>
</dbReference>
<dbReference type="InterPro" id="IPR043926">
    <property type="entry name" value="ABCG_dom"/>
</dbReference>
<dbReference type="InterPro" id="IPR050352">
    <property type="entry name" value="ABCG_transporters"/>
</dbReference>
<dbReference type="InterPro" id="IPR027417">
    <property type="entry name" value="P-loop_NTPase"/>
</dbReference>
<dbReference type="PANTHER" id="PTHR48041">
    <property type="entry name" value="ABC TRANSPORTER G FAMILY MEMBER 28"/>
    <property type="match status" value="1"/>
</dbReference>
<dbReference type="PANTHER" id="PTHR48041:SF27">
    <property type="entry name" value="ABC TRANSPORTER G FAMILY MEMBER 8"/>
    <property type="match status" value="1"/>
</dbReference>
<dbReference type="Pfam" id="PF01061">
    <property type="entry name" value="ABC2_membrane"/>
    <property type="match status" value="1"/>
</dbReference>
<dbReference type="Pfam" id="PF19055">
    <property type="entry name" value="ABC2_membrane_7"/>
    <property type="match status" value="1"/>
</dbReference>
<dbReference type="Pfam" id="PF00005">
    <property type="entry name" value="ABC_tran"/>
    <property type="match status" value="1"/>
</dbReference>
<dbReference type="SMART" id="SM00382">
    <property type="entry name" value="AAA"/>
    <property type="match status" value="1"/>
</dbReference>
<dbReference type="SUPFAM" id="SSF52540">
    <property type="entry name" value="P-loop containing nucleoside triphosphate hydrolases"/>
    <property type="match status" value="1"/>
</dbReference>
<dbReference type="PROSITE" id="PS00211">
    <property type="entry name" value="ABC_TRANSPORTER_1"/>
    <property type="match status" value="1"/>
</dbReference>
<dbReference type="PROSITE" id="PS50893">
    <property type="entry name" value="ABC_TRANSPORTER_2"/>
    <property type="match status" value="1"/>
</dbReference>
<keyword id="KW-0067">ATP-binding</keyword>
<keyword id="KW-0472">Membrane</keyword>
<keyword id="KW-0547">Nucleotide-binding</keyword>
<keyword id="KW-1185">Reference proteome</keyword>
<keyword id="KW-0812">Transmembrane</keyword>
<keyword id="KW-1133">Transmembrane helix</keyword>
<keyword id="KW-0813">Transport</keyword>
<organism>
    <name type="scientific">Arabidopsis thaliana</name>
    <name type="common">Mouse-ear cress</name>
    <dbReference type="NCBI Taxonomy" id="3702"/>
    <lineage>
        <taxon>Eukaryota</taxon>
        <taxon>Viridiplantae</taxon>
        <taxon>Streptophyta</taxon>
        <taxon>Embryophyta</taxon>
        <taxon>Tracheophyta</taxon>
        <taxon>Spermatophyta</taxon>
        <taxon>Magnoliopsida</taxon>
        <taxon>eudicotyledons</taxon>
        <taxon>Gunneridae</taxon>
        <taxon>Pentapetalae</taxon>
        <taxon>rosids</taxon>
        <taxon>malvids</taxon>
        <taxon>Brassicales</taxon>
        <taxon>Brassicaceae</taxon>
        <taxon>Camelineae</taxon>
        <taxon>Arabidopsis</taxon>
    </lineage>
</organism>
<proteinExistence type="evidence at transcript level"/>
<evidence type="ECO:0000250" key="1"/>
<evidence type="ECO:0000255" key="2"/>
<evidence type="ECO:0000255" key="3">
    <source>
        <dbReference type="PROSITE-ProRule" id="PRU00434"/>
    </source>
</evidence>
<evidence type="ECO:0000305" key="4"/>
<sequence length="589" mass="65934">MEIPPSPPPETAAYTLTTSSISYTIPKTSLSLLRFPATEPPSFILRNITLTAHPTEILAVVGPSGAGKSTLLDILASKTSPTSGSILLNSIPINPSSYRKISSYVPQHDSFFPLLTVSETFSFAACLLLPNPSIVSETVTSLLSELNLTHLSHTRLAQGLSGGERRRVSIGLSLLHDPCFLLLDEPTSGLDSKSAFDVIHILKSIAVSRQRTVILSIHQPSFKILSIIDRLLLLSKGTVVYHGRLDSLEGFLLFKGFTVPPQLNSLEYAMEILQELRESDGNTDATALPSIENRKQREKQSIVRYRKSRITEISLLARRFWKIIYRTRQLLLTNALEALVVGLVLGTIYINIGIGKAGIEKRFGMFAFTLTFLLSSTTETLPIFINERPILLRETSSGIYRLSSHILANTLVFLPYLFVISIIYSVSVYFLIGLCPTWQAFGYFVLVIWIILLMANSFVLFLSSLAPNYITGTSLVTILLAAFFLFSGYFISKESLPKYWLFMYFFSMYKYALDALLINEYSCLASKCLVWLEEAQTKICMVTGGDVLKKKGLHEKQRWFNVYVLLGFFVLYRVLCFLALLRRVSGSKR</sequence>
<feature type="chain" id="PRO_0000240680" description="ABC transporter G family member 8">
    <location>
        <begin position="1"/>
        <end position="589"/>
    </location>
</feature>
<feature type="transmembrane region" description="Helical" evidence="2">
    <location>
        <begin position="335"/>
        <end position="355"/>
    </location>
</feature>
<feature type="transmembrane region" description="Helical" evidence="2">
    <location>
        <begin position="365"/>
        <end position="385"/>
    </location>
</feature>
<feature type="transmembrane region" description="Helical" evidence="2">
    <location>
        <begin position="412"/>
        <end position="432"/>
    </location>
</feature>
<feature type="transmembrane region" description="Helical" evidence="2">
    <location>
        <begin position="441"/>
        <end position="461"/>
    </location>
</feature>
<feature type="transmembrane region" description="Helical" evidence="2">
    <location>
        <begin position="470"/>
        <end position="490"/>
    </location>
</feature>
<feature type="transmembrane region" description="Helical" evidence="2">
    <location>
        <begin position="499"/>
        <end position="519"/>
    </location>
</feature>
<feature type="transmembrane region" description="Helical" evidence="2">
    <location>
        <begin position="560"/>
        <end position="580"/>
    </location>
</feature>
<feature type="domain" description="ABC transporter" evidence="3">
    <location>
        <begin position="16"/>
        <end position="261"/>
    </location>
</feature>
<feature type="domain" description="ABC transmembrane type-2">
    <location>
        <begin position="311"/>
        <end position="521"/>
    </location>
</feature>
<feature type="binding site" evidence="3">
    <location>
        <begin position="62"/>
        <end position="69"/>
    </location>
    <ligand>
        <name>ATP</name>
        <dbReference type="ChEBI" id="CHEBI:30616"/>
    </ligand>
</feature>
<accession>Q9FLX5</accession>
<comment type="subcellular location">
    <subcellularLocation>
        <location evidence="1">Membrane</location>
        <topology evidence="1">Multi-pass membrane protein</topology>
    </subcellularLocation>
</comment>
<comment type="similarity">
    <text evidence="4">Belongs to the ABC transporter superfamily. ABCG family. Eye pigment precursor importer (TC 3.A.1.204) subfamily.</text>
</comment>
<reference key="1">
    <citation type="journal article" date="1998" name="DNA Res.">
        <title>Structural analysis of Arabidopsis thaliana chromosome 5. IV. Sequence features of the regions of 1,456,315 bp covered by nineteen physically assigned P1 and TAC clones.</title>
        <authorList>
            <person name="Sato S."/>
            <person name="Kaneko T."/>
            <person name="Kotani H."/>
            <person name="Nakamura Y."/>
            <person name="Asamizu E."/>
            <person name="Miyajima N."/>
            <person name="Tabata S."/>
        </authorList>
    </citation>
    <scope>NUCLEOTIDE SEQUENCE [LARGE SCALE GENOMIC DNA]</scope>
    <source>
        <strain>cv. Columbia</strain>
    </source>
</reference>
<reference key="2">
    <citation type="journal article" date="2017" name="Plant J.">
        <title>Araport11: a complete reannotation of the Arabidopsis thaliana reference genome.</title>
        <authorList>
            <person name="Cheng C.Y."/>
            <person name="Krishnakumar V."/>
            <person name="Chan A.P."/>
            <person name="Thibaud-Nissen F."/>
            <person name="Schobel S."/>
            <person name="Town C.D."/>
        </authorList>
    </citation>
    <scope>GENOME REANNOTATION</scope>
    <source>
        <strain>cv. Columbia</strain>
    </source>
</reference>
<reference key="3">
    <citation type="journal article" date="2001" name="J. Biol. Chem.">
        <title>The Arabidopsis thaliana ABC protein superfamily, a complete inventory.</title>
        <authorList>
            <person name="Sanchez-Fernandez R."/>
            <person name="Davies T.G."/>
            <person name="Coleman J.O."/>
            <person name="Rea P.A."/>
        </authorList>
    </citation>
    <scope>GENE FAMILY</scope>
    <scope>NOMENCLATURE</scope>
</reference>
<reference key="4">
    <citation type="journal article" date="2008" name="Trends Plant Sci.">
        <title>Plant ABC proteins - a unified nomenclature and updated inventory.</title>
        <authorList>
            <person name="Verrier P.J."/>
            <person name="Bird D."/>
            <person name="Burla B."/>
            <person name="Dassa E."/>
            <person name="Forestier C."/>
            <person name="Geisler M."/>
            <person name="Klein M."/>
            <person name="Kolukisaoglu H.U."/>
            <person name="Lee Y."/>
            <person name="Martinoia E."/>
            <person name="Murphy A."/>
            <person name="Rea P.A."/>
            <person name="Samuels L."/>
            <person name="Schulz B."/>
            <person name="Spalding E.J."/>
            <person name="Yazaki K."/>
            <person name="Theodoulou F.L."/>
        </authorList>
    </citation>
    <scope>GENE FAMILY</scope>
    <scope>NOMENCLATURE</scope>
</reference>
<protein>
    <recommendedName>
        <fullName>ABC transporter G family member 8</fullName>
        <shortName>ABC transporter ABCG.8</shortName>
        <shortName>AtABCG8</shortName>
    </recommendedName>
    <alternativeName>
        <fullName>Probable white-brown complex homolog protein 8</fullName>
        <shortName>AtWBC8</shortName>
    </alternativeName>
</protein>
<name>AB8G_ARATH</name>